<evidence type="ECO:0000250" key="1"/>
<evidence type="ECO:0000255" key="2"/>
<evidence type="ECO:0000269" key="3">
    <source>
    </source>
</evidence>
<evidence type="ECO:0000303" key="4">
    <source>
    </source>
</evidence>
<evidence type="ECO:0000305" key="5"/>
<evidence type="ECO:0000305" key="6">
    <source>
    </source>
</evidence>
<reference key="1">
    <citation type="journal article" date="1992" name="J. Bacteriol.">
        <title>Leuconostoc lactis beta-galactosidase is encoded by two overlapping genes.</title>
        <authorList>
            <person name="David S."/>
            <person name="Stevens H."/>
            <person name="van Riel M."/>
            <person name="Simons G."/>
            <person name="de Vos W.M."/>
        </authorList>
    </citation>
    <scope>NUCLEOTIDE SEQUENCE [GENOMIC DNA]</scope>
    <scope>PROTEIN SEQUENCE OF 1-6</scope>
    <scope>FUNCTION</scope>
    <scope>CATALYTIC ACTIVITY</scope>
    <scope>SUBUNIT</scope>
    <source>
        <strain>NZ6009</strain>
    </source>
</reference>
<keyword id="KW-0903">Direct protein sequencing</keyword>
<keyword id="KW-0326">Glycosidase</keyword>
<keyword id="KW-0378">Hydrolase</keyword>
<keyword id="KW-0614">Plasmid</keyword>
<sequence>MQANLQWLDDPEVFRVNQLPAHSDHHYYHDTAEFKTGSRFIKSLNGAWRFNFAKTPAERPVDFYQPDFDATDFDTIQVPGHIELAGYGQIQYINTLYPWEGKIYRRPPYTLNQDQLTPGLFSDAADNTVGSYLKTFDLDDVFKGQRIIIQFQGVEEALYVWLNGHFIGYSEDSFTPSEFDLTPYIQDQGNVLAVRVYKHSTAAFIEDQDMFRFSGIFRDVNILAEPASHITDLDIRPVPNANLKSGELNITTKVTGEPATLALTVKDHDGRVLTSQTQTGSGSVTFDTMLFDQLHLWSPQTPYLYQLTIEVYDADHQLLEVVPYQFGFRTVELRDDKVIYVNNKRLVINGVNRHEWNAHTGRVISMADMRADIQTMLANNINADRTCHYPDQLPWYQLCDEAGIYLMAETNLESHGSWQKMGAIEPSYNVPGDNPHWPAAVIDRARSNYEWFKNHPSIIFWSLGNESYAGEDIAAMQAFYKEHDDSRLVHYEGVFYTPELKDRISDVESRMYEKPQNIVAYLEDNPTKPFLNCEYMHDMGNSLGGMQSYNDLIDKYPMYQGGFIWDFIDQALFVHDPITDQDVLRYGGDFDERHSDYAFSGNGLMFADRTPKPAMQEVKYYYGLHK</sequence>
<geneLocation type="plasmid">
    <name>pNZ63</name>
</geneLocation>
<organism>
    <name type="scientific">Leuconostoc lactis</name>
    <dbReference type="NCBI Taxonomy" id="1246"/>
    <lineage>
        <taxon>Bacteria</taxon>
        <taxon>Bacillati</taxon>
        <taxon>Bacillota</taxon>
        <taxon>Bacilli</taxon>
        <taxon>Lactobacillales</taxon>
        <taxon>Lactobacillaceae</taxon>
        <taxon>Leuconostoc</taxon>
    </lineage>
</organism>
<gene>
    <name evidence="4" type="primary">lacL</name>
</gene>
<protein>
    <recommendedName>
        <fullName evidence="6">Beta-galactosidase large subunit</fullName>
        <shortName evidence="6">Beta-gal large subunit</shortName>
        <ecNumber evidence="3">3.2.1.23</ecNumber>
    </recommendedName>
</protein>
<feature type="chain" id="PRO_0000057672" description="Beta-galactosidase large subunit">
    <location>
        <begin position="1"/>
        <end position="626"/>
    </location>
</feature>
<feature type="active site" description="Proton donor" evidence="1">
    <location>
        <position position="466"/>
    </location>
</feature>
<feature type="active site" description="Nucleophile" evidence="1">
    <location>
        <position position="534"/>
    </location>
</feature>
<feature type="site" description="Has an effect on thermostability" evidence="2">
    <location>
        <position position="318"/>
    </location>
</feature>
<comment type="function">
    <text evidence="3">Component of a beta-galactosidase that displays activity with the artificial chromogenic substrate o-nitrophenyl-beta-D-galactopyranoside (ONPG).</text>
</comment>
<comment type="catalytic activity">
    <reaction evidence="3">
        <text>Hydrolysis of terminal non-reducing beta-D-galactose residues in beta-D-galactosides.</text>
        <dbReference type="EC" id="3.2.1.23"/>
    </reaction>
</comment>
<comment type="subunit">
    <text evidence="3">Heterodimer of a large (LacL) and a small subunit (LacM).</text>
</comment>
<comment type="similarity">
    <text evidence="5">Belongs to the glycosyl hydrolase 2 family.</text>
</comment>
<dbReference type="EC" id="3.2.1.23" evidence="3"/>
<dbReference type="EMBL" id="M92281">
    <property type="protein sequence ID" value="AAA25267.1"/>
    <property type="molecule type" value="Genomic_DNA"/>
</dbReference>
<dbReference type="PIR" id="A42891">
    <property type="entry name" value="A42891"/>
</dbReference>
<dbReference type="SMR" id="Q02603"/>
<dbReference type="CAZy" id="GH2">
    <property type="family name" value="Glycoside Hydrolase Family 2"/>
</dbReference>
<dbReference type="GO" id="GO:0009341">
    <property type="term" value="C:beta-galactosidase complex"/>
    <property type="evidence" value="ECO:0007669"/>
    <property type="project" value="TreeGrafter"/>
</dbReference>
<dbReference type="GO" id="GO:0004565">
    <property type="term" value="F:beta-galactosidase activity"/>
    <property type="evidence" value="ECO:0007669"/>
    <property type="project" value="UniProtKB-EC"/>
</dbReference>
<dbReference type="GO" id="GO:0005990">
    <property type="term" value="P:lactose catabolic process"/>
    <property type="evidence" value="ECO:0007669"/>
    <property type="project" value="TreeGrafter"/>
</dbReference>
<dbReference type="Gene3D" id="2.60.120.260">
    <property type="entry name" value="Galactose-binding domain-like"/>
    <property type="match status" value="1"/>
</dbReference>
<dbReference type="Gene3D" id="3.20.20.80">
    <property type="entry name" value="Glycosidases"/>
    <property type="match status" value="1"/>
</dbReference>
<dbReference type="Gene3D" id="2.60.40.10">
    <property type="entry name" value="Immunoglobulins"/>
    <property type="match status" value="1"/>
</dbReference>
<dbReference type="InterPro" id="IPR050347">
    <property type="entry name" value="Bact_Beta-galactosidase"/>
</dbReference>
<dbReference type="InterPro" id="IPR036156">
    <property type="entry name" value="Beta-gal/glucu_dom_sf"/>
</dbReference>
<dbReference type="InterPro" id="IPR008979">
    <property type="entry name" value="Galactose-bd-like_sf"/>
</dbReference>
<dbReference type="InterPro" id="IPR006101">
    <property type="entry name" value="Glyco_hydro_2"/>
</dbReference>
<dbReference type="InterPro" id="IPR023232">
    <property type="entry name" value="Glyco_hydro_2_AS"/>
</dbReference>
<dbReference type="InterPro" id="IPR006103">
    <property type="entry name" value="Glyco_hydro_2_cat"/>
</dbReference>
<dbReference type="InterPro" id="IPR023230">
    <property type="entry name" value="Glyco_hydro_2_CS"/>
</dbReference>
<dbReference type="InterPro" id="IPR006102">
    <property type="entry name" value="Glyco_hydro_2_Ig-like"/>
</dbReference>
<dbReference type="InterPro" id="IPR006104">
    <property type="entry name" value="Glyco_hydro_2_N"/>
</dbReference>
<dbReference type="InterPro" id="IPR017853">
    <property type="entry name" value="Glycoside_hydrolase_SF"/>
</dbReference>
<dbReference type="InterPro" id="IPR013783">
    <property type="entry name" value="Ig-like_fold"/>
</dbReference>
<dbReference type="PANTHER" id="PTHR46323">
    <property type="entry name" value="BETA-GALACTOSIDASE"/>
    <property type="match status" value="1"/>
</dbReference>
<dbReference type="PANTHER" id="PTHR46323:SF2">
    <property type="entry name" value="BETA-GALACTOSIDASE"/>
    <property type="match status" value="1"/>
</dbReference>
<dbReference type="Pfam" id="PF00703">
    <property type="entry name" value="Glyco_hydro_2"/>
    <property type="match status" value="1"/>
</dbReference>
<dbReference type="Pfam" id="PF02836">
    <property type="entry name" value="Glyco_hydro_2_C"/>
    <property type="match status" value="1"/>
</dbReference>
<dbReference type="Pfam" id="PF02837">
    <property type="entry name" value="Glyco_hydro_2_N"/>
    <property type="match status" value="1"/>
</dbReference>
<dbReference type="PRINTS" id="PR00132">
    <property type="entry name" value="GLHYDRLASE2"/>
</dbReference>
<dbReference type="SUPFAM" id="SSF51445">
    <property type="entry name" value="(Trans)glycosidases"/>
    <property type="match status" value="1"/>
</dbReference>
<dbReference type="SUPFAM" id="SSF49303">
    <property type="entry name" value="beta-Galactosidase/glucuronidase domain"/>
    <property type="match status" value="1"/>
</dbReference>
<dbReference type="SUPFAM" id="SSF49785">
    <property type="entry name" value="Galactose-binding domain-like"/>
    <property type="match status" value="1"/>
</dbReference>
<dbReference type="PROSITE" id="PS00719">
    <property type="entry name" value="GLYCOSYL_HYDROL_F2_1"/>
    <property type="match status" value="1"/>
</dbReference>
<dbReference type="PROSITE" id="PS00608">
    <property type="entry name" value="GLYCOSYL_HYDROL_F2_2"/>
    <property type="match status" value="1"/>
</dbReference>
<accession>Q02603</accession>
<name>BGAL_LEULA</name>
<proteinExistence type="evidence at protein level"/>